<keyword id="KW-0007">Acetylation</keyword>
<keyword id="KW-0903">Direct protein sequencing</keyword>
<keyword id="KW-0249">Electron transport</keyword>
<keyword id="KW-0349">Heme</keyword>
<keyword id="KW-0408">Iron</keyword>
<keyword id="KW-0479">Metal-binding</keyword>
<keyword id="KW-0496">Mitochondrion</keyword>
<keyword id="KW-0679">Respiratory chain</keyword>
<keyword id="KW-0813">Transport</keyword>
<feature type="initiator methionine" description="Removed" evidence="2">
    <location>
        <position position="1"/>
    </location>
</feature>
<feature type="chain" id="PRO_0000108241" description="Cytochrome c">
    <location>
        <begin position="2"/>
        <end position="105"/>
    </location>
</feature>
<feature type="binding site" description="covalent" evidence="1 2">
    <location>
        <position position="15"/>
    </location>
    <ligand>
        <name>heme c</name>
        <dbReference type="ChEBI" id="CHEBI:61717"/>
    </ligand>
</feature>
<feature type="binding site" description="covalent" evidence="1 2">
    <location>
        <position position="18"/>
    </location>
    <ligand>
        <name>heme c</name>
        <dbReference type="ChEBI" id="CHEBI:61717"/>
    </ligand>
</feature>
<feature type="binding site" description="axial binding residue">
    <location>
        <position position="19"/>
    </location>
    <ligand>
        <name>heme c</name>
        <dbReference type="ChEBI" id="CHEBI:61717"/>
    </ligand>
    <ligandPart>
        <name>Fe</name>
        <dbReference type="ChEBI" id="CHEBI:18248"/>
    </ligandPart>
</feature>
<feature type="binding site" description="axial binding residue">
    <location>
        <position position="81"/>
    </location>
    <ligand>
        <name>heme c</name>
        <dbReference type="ChEBI" id="CHEBI:61717"/>
    </ligand>
    <ligandPart>
        <name>Fe</name>
        <dbReference type="ChEBI" id="CHEBI:18248"/>
    </ligandPart>
</feature>
<feature type="modified residue" description="N-acetylglycine" evidence="2">
    <location>
        <position position="2"/>
    </location>
</feature>
<protein>
    <recommendedName>
        <fullName>Cytochrome c</fullName>
    </recommendedName>
</protein>
<proteinExistence type="evidence at protein level"/>
<reference key="1">
    <citation type="journal article" date="1973" name="Biochim. Biophys. Acta">
        <title>Primary structure of cytochrome c from the emu, Dromaeus novaehollandiae.</title>
        <authorList>
            <person name="Augusteyn R.C."/>
        </authorList>
    </citation>
    <scope>PROTEIN SEQUENCE OF 2-105</scope>
    <scope>ACETYLATION AT GLY-2</scope>
</reference>
<sequence>MGDIEKGKKIFVQKCSQCHTVEKGGKHKTGPNLNGLFGRKTGQAEGFSYTDANKNKGITWGEDTLMEYLENPKKYIPGTKMIFAGIKKKSERADLIAYLKDATSK</sequence>
<organism>
    <name type="scientific">Dromaius novaehollandiae</name>
    <name type="common">Emu</name>
    <dbReference type="NCBI Taxonomy" id="8790"/>
    <lineage>
        <taxon>Eukaryota</taxon>
        <taxon>Metazoa</taxon>
        <taxon>Chordata</taxon>
        <taxon>Craniata</taxon>
        <taxon>Vertebrata</taxon>
        <taxon>Euteleostomi</taxon>
        <taxon>Archelosauria</taxon>
        <taxon>Archosauria</taxon>
        <taxon>Dinosauria</taxon>
        <taxon>Saurischia</taxon>
        <taxon>Theropoda</taxon>
        <taxon>Coelurosauria</taxon>
        <taxon>Aves</taxon>
        <taxon>Palaeognathae</taxon>
        <taxon>Casuariiformes</taxon>
        <taxon>Dromaiidae</taxon>
        <taxon>Dromaius</taxon>
    </lineage>
</organism>
<name>CYC_DRONO</name>
<evidence type="ECO:0000255" key="1">
    <source>
        <dbReference type="PROSITE-ProRule" id="PRU00433"/>
    </source>
</evidence>
<evidence type="ECO:0000269" key="2">
    <source>
    </source>
</evidence>
<evidence type="ECO:0000305" key="3"/>
<gene>
    <name type="primary">CYC</name>
</gene>
<comment type="function">
    <text>Electron carrier protein. The oxidized form of the cytochrome c heme group can accept an electron from the heme group of the cytochrome c1 subunit of cytochrome reductase. Cytochrome c then transfers this electron to the cytochrome oxidase complex, the final protein carrier in the mitochondrial electron-transport chain.</text>
</comment>
<comment type="subcellular location">
    <subcellularLocation>
        <location>Mitochondrion intermembrane space</location>
    </subcellularLocation>
    <text>Loosely associated with the inner membrane.</text>
</comment>
<comment type="PTM">
    <text>Binds 1 heme c group covalently per subunit.</text>
</comment>
<comment type="similarity">
    <text evidence="3">Belongs to the cytochrome c family.</text>
</comment>
<comment type="online information" name="Protein Spotlight">
    <link uri="https://www.proteinspotlight.org/back_issues/076"/>
    <text>Life shuttle - Issue 76 of November 2006</text>
</comment>
<accession>P00018</accession>
<dbReference type="PIR" id="A00017">
    <property type="entry name" value="CCEU"/>
</dbReference>
<dbReference type="SMR" id="P00018"/>
<dbReference type="iPTMnet" id="P00018"/>
<dbReference type="Ensembl" id="ENSDNVT00000020068.1">
    <property type="protein sequence ID" value="ENSDNVP00000016702.1"/>
    <property type="gene ID" value="ENSDNVG00000011693.1"/>
</dbReference>
<dbReference type="Proteomes" id="UP000694423">
    <property type="component" value="Unplaced"/>
</dbReference>
<dbReference type="GO" id="GO:0005758">
    <property type="term" value="C:mitochondrial intermembrane space"/>
    <property type="evidence" value="ECO:0007669"/>
    <property type="project" value="UniProtKB-SubCell"/>
</dbReference>
<dbReference type="GO" id="GO:0009055">
    <property type="term" value="F:electron transfer activity"/>
    <property type="evidence" value="ECO:0007669"/>
    <property type="project" value="InterPro"/>
</dbReference>
<dbReference type="GO" id="GO:0020037">
    <property type="term" value="F:heme binding"/>
    <property type="evidence" value="ECO:0007669"/>
    <property type="project" value="InterPro"/>
</dbReference>
<dbReference type="GO" id="GO:0046872">
    <property type="term" value="F:metal ion binding"/>
    <property type="evidence" value="ECO:0007669"/>
    <property type="project" value="UniProtKB-KW"/>
</dbReference>
<dbReference type="FunFam" id="1.10.760.10:FF:000008">
    <property type="entry name" value="Cytochrome c"/>
    <property type="match status" value="1"/>
</dbReference>
<dbReference type="Gene3D" id="1.10.760.10">
    <property type="entry name" value="Cytochrome c-like domain"/>
    <property type="match status" value="1"/>
</dbReference>
<dbReference type="InterPro" id="IPR009056">
    <property type="entry name" value="Cyt_c-like_dom"/>
</dbReference>
<dbReference type="InterPro" id="IPR036909">
    <property type="entry name" value="Cyt_c-like_dom_sf"/>
</dbReference>
<dbReference type="InterPro" id="IPR002327">
    <property type="entry name" value="Cyt_c_1A/1B"/>
</dbReference>
<dbReference type="PANTHER" id="PTHR11961">
    <property type="entry name" value="CYTOCHROME C"/>
    <property type="match status" value="1"/>
</dbReference>
<dbReference type="Pfam" id="PF00034">
    <property type="entry name" value="Cytochrom_C"/>
    <property type="match status" value="1"/>
</dbReference>
<dbReference type="PRINTS" id="PR00604">
    <property type="entry name" value="CYTCHRMECIAB"/>
</dbReference>
<dbReference type="SUPFAM" id="SSF46626">
    <property type="entry name" value="Cytochrome c"/>
    <property type="match status" value="1"/>
</dbReference>
<dbReference type="PROSITE" id="PS51007">
    <property type="entry name" value="CYTC"/>
    <property type="match status" value="1"/>
</dbReference>